<reference key="1">
    <citation type="journal article" date="2003" name="Biochemistry">
        <title>A mutation causing a reduced level of expression of six beta4-galactosyltransferase genes is the basis of the Lec19 CHO glycosylation mutant.</title>
        <authorList>
            <person name="Lee J."/>
            <person name="Park S.-H."/>
            <person name="Sundaram S."/>
            <person name="Raju T.S."/>
            <person name="Shaper N.L."/>
            <person name="Stanley P."/>
        </authorList>
    </citation>
    <scope>NUCLEOTIDE SEQUENCE [MRNA]</scope>
    <source>
        <tissue>Ovary</tissue>
    </source>
</reference>
<sequence>MGCNPPYLLPYRLRLLLFFTLCLTVVGWVTSNYFVDPIQVIPKAKVFMASFYKVIPLGKEETLVHDATMEKVELGNCPSVSPNLRGQSKLIFEPDLTLEEVQAKNPKVSGGRYHPEECKAVQRVAVLIPHRNREKHLTYLLEHLHPFLQRQQLDYGIYIIHQTGSKKFNRAKLLNVGYLEALKEQNWDCFIFHDVDLVPENDFNLYTCGDQPKHLVVGRNSTGYRLRYSKYFGGVTALSREQFFKVNGFSNNYWGWGGEDDDLRLRVELHKMKISRPNPDVGKYTMIFHTRDKGNEVNVDRMKLLHQMSRVWKTDGLSSCSYRLLSVEHNPLYTNITVDFWTGV</sequence>
<protein>
    <recommendedName>
        <fullName>Beta-1,4-galactosyltransferase 4</fullName>
        <shortName>Beta-1,4-GalTase 4</shortName>
        <shortName>Beta4Gal-T4</shortName>
        <shortName>b4Gal-T4</shortName>
        <ecNumber evidence="2">2.4.1.-</ecNumber>
    </recommendedName>
    <alternativeName>
        <fullName>Beta-N-acetylglucosaminyl-glycolipid beta-1,4-galactosyltransferase</fullName>
    </alternativeName>
    <alternativeName>
        <fullName>Lactotriaosylceramide beta-1,4-galactosyltransferase</fullName>
        <ecNumber evidence="2">2.4.1.275</ecNumber>
    </alternativeName>
    <alternativeName>
        <fullName>N-acetyllactosamine synthase</fullName>
        <ecNumber evidence="2">2.4.1.90</ecNumber>
    </alternativeName>
    <alternativeName>
        <fullName>Nal synthase</fullName>
    </alternativeName>
    <alternativeName>
        <fullName>UDP-Gal:beta-GlcNAc beta-1,4-galactosyltransferase 4</fullName>
    </alternativeName>
    <alternativeName>
        <fullName>UDP-galactose:beta-N-acetylglucosamine beta-1,4-galactosyltransferase 4</fullName>
    </alternativeName>
</protein>
<gene>
    <name type="primary">B4GALT4</name>
</gene>
<keyword id="KW-1015">Disulfide bond</keyword>
<keyword id="KW-0325">Glycoprotein</keyword>
<keyword id="KW-0328">Glycosyltransferase</keyword>
<keyword id="KW-0333">Golgi apparatus</keyword>
<keyword id="KW-0443">Lipid metabolism</keyword>
<keyword id="KW-0464">Manganese</keyword>
<keyword id="KW-0472">Membrane</keyword>
<keyword id="KW-0479">Metal-binding</keyword>
<keyword id="KW-0735">Signal-anchor</keyword>
<keyword id="KW-0808">Transferase</keyword>
<keyword id="KW-0812">Transmembrane</keyword>
<keyword id="KW-1133">Transmembrane helix</keyword>
<evidence type="ECO:0000250" key="1"/>
<evidence type="ECO:0000250" key="2">
    <source>
        <dbReference type="UniProtKB" id="O60513"/>
    </source>
</evidence>
<evidence type="ECO:0000255" key="3"/>
<evidence type="ECO:0000305" key="4"/>
<dbReference type="EC" id="2.4.1.-" evidence="2"/>
<dbReference type="EC" id="2.4.1.275" evidence="2"/>
<dbReference type="EC" id="2.4.1.90" evidence="2"/>
<dbReference type="EMBL" id="AY117538">
    <property type="protein sequence ID" value="AAM77197.1"/>
    <property type="molecule type" value="mRNA"/>
</dbReference>
<dbReference type="RefSeq" id="NP_001233624.1">
    <property type="nucleotide sequence ID" value="NM_001246695.1"/>
</dbReference>
<dbReference type="RefSeq" id="XP_007647946.1">
    <property type="nucleotide sequence ID" value="XM_007649756.2"/>
</dbReference>
<dbReference type="RefSeq" id="XP_007647947.1">
    <property type="nucleotide sequence ID" value="XM_007649757.2"/>
</dbReference>
<dbReference type="RefSeq" id="XP_007647948.1">
    <property type="nucleotide sequence ID" value="XM_007649758.2"/>
</dbReference>
<dbReference type="RefSeq" id="XP_016834525.1">
    <property type="nucleotide sequence ID" value="XM_016979036.1"/>
</dbReference>
<dbReference type="SMR" id="Q80WN7"/>
<dbReference type="CAZy" id="GT7">
    <property type="family name" value="Glycosyltransferase Family 7"/>
</dbReference>
<dbReference type="GlyCosmos" id="Q80WN7">
    <property type="glycosylation" value="2 sites, No reported glycans"/>
</dbReference>
<dbReference type="PaxDb" id="10029-XP_007647949.1"/>
<dbReference type="Ensembl" id="ENSCGRT00001023241.1">
    <property type="protein sequence ID" value="ENSCGRP00001018997.1"/>
    <property type="gene ID" value="ENSCGRG00001018573.1"/>
</dbReference>
<dbReference type="GeneID" id="100689435"/>
<dbReference type="KEGG" id="cge:100689435"/>
<dbReference type="CTD" id="8702"/>
<dbReference type="eggNOG" id="KOG3916">
    <property type="taxonomic scope" value="Eukaryota"/>
</dbReference>
<dbReference type="GeneTree" id="ENSGT00940000158378"/>
<dbReference type="OMA" id="TSNYFVD"/>
<dbReference type="OrthoDB" id="10016069at2759"/>
<dbReference type="UniPathway" id="UPA00378"/>
<dbReference type="Proteomes" id="UP000694386">
    <property type="component" value="Unplaced"/>
</dbReference>
<dbReference type="Proteomes" id="UP001108280">
    <property type="component" value="Chromosome 4"/>
</dbReference>
<dbReference type="GO" id="GO:0032580">
    <property type="term" value="C:Golgi cisterna membrane"/>
    <property type="evidence" value="ECO:0007669"/>
    <property type="project" value="UniProtKB-SubCell"/>
</dbReference>
<dbReference type="GO" id="GO:0000139">
    <property type="term" value="C:Golgi membrane"/>
    <property type="evidence" value="ECO:0007669"/>
    <property type="project" value="Ensembl"/>
</dbReference>
<dbReference type="GO" id="GO:0046872">
    <property type="term" value="F:metal ion binding"/>
    <property type="evidence" value="ECO:0007669"/>
    <property type="project" value="UniProtKB-KW"/>
</dbReference>
<dbReference type="GO" id="GO:0003945">
    <property type="term" value="F:N-acetyllactosamine synthase activity"/>
    <property type="evidence" value="ECO:0007669"/>
    <property type="project" value="UniProtKB-EC"/>
</dbReference>
<dbReference type="GO" id="GO:0035250">
    <property type="term" value="F:UDP-galactosyltransferase activity"/>
    <property type="evidence" value="ECO:0000250"/>
    <property type="project" value="UniProtKB"/>
</dbReference>
<dbReference type="GO" id="GO:0005975">
    <property type="term" value="P:carbohydrate metabolic process"/>
    <property type="evidence" value="ECO:0007669"/>
    <property type="project" value="InterPro"/>
</dbReference>
<dbReference type="GO" id="GO:0018146">
    <property type="term" value="P:keratan sulfate proteoglycan biosynthetic process"/>
    <property type="evidence" value="ECO:0000250"/>
    <property type="project" value="UniProtKB"/>
</dbReference>
<dbReference type="GO" id="GO:0001572">
    <property type="term" value="P:lactosylceramide biosynthetic process"/>
    <property type="evidence" value="ECO:0007669"/>
    <property type="project" value="Ensembl"/>
</dbReference>
<dbReference type="GO" id="GO:0006486">
    <property type="term" value="P:protein glycosylation"/>
    <property type="evidence" value="ECO:0007669"/>
    <property type="project" value="UniProtKB-UniPathway"/>
</dbReference>
<dbReference type="CDD" id="cd00899">
    <property type="entry name" value="b4GalT"/>
    <property type="match status" value="1"/>
</dbReference>
<dbReference type="FunFam" id="3.90.550.10:FF:000028">
    <property type="entry name" value="beta-1,4-galactosyltransferase 1"/>
    <property type="match status" value="1"/>
</dbReference>
<dbReference type="Gene3D" id="3.90.550.10">
    <property type="entry name" value="Spore Coat Polysaccharide Biosynthesis Protein SpsA, Chain A"/>
    <property type="match status" value="1"/>
</dbReference>
<dbReference type="InterPro" id="IPR003859">
    <property type="entry name" value="Galactosyl_T"/>
</dbReference>
<dbReference type="InterPro" id="IPR027791">
    <property type="entry name" value="Galactosyl_T_C"/>
</dbReference>
<dbReference type="InterPro" id="IPR027995">
    <property type="entry name" value="Galactosyl_T_N"/>
</dbReference>
<dbReference type="InterPro" id="IPR029044">
    <property type="entry name" value="Nucleotide-diphossugar_trans"/>
</dbReference>
<dbReference type="PANTHER" id="PTHR19300">
    <property type="entry name" value="BETA-1,4-GALACTOSYLTRANSFERASE"/>
    <property type="match status" value="1"/>
</dbReference>
<dbReference type="PANTHER" id="PTHR19300:SF9">
    <property type="entry name" value="BETA-1,4-GALACTOSYLTRANSFERASE 4"/>
    <property type="match status" value="1"/>
</dbReference>
<dbReference type="Pfam" id="PF02709">
    <property type="entry name" value="Glyco_transf_7C"/>
    <property type="match status" value="1"/>
</dbReference>
<dbReference type="Pfam" id="PF13733">
    <property type="entry name" value="Glyco_transf_7N"/>
    <property type="match status" value="1"/>
</dbReference>
<dbReference type="PRINTS" id="PR02050">
    <property type="entry name" value="B14GALTRFASE"/>
</dbReference>
<dbReference type="SUPFAM" id="SSF53448">
    <property type="entry name" value="Nucleotide-diphospho-sugar transferases"/>
    <property type="match status" value="1"/>
</dbReference>
<feature type="chain" id="PRO_0000080541" description="Beta-1,4-galactosyltransferase 4">
    <location>
        <begin position="1"/>
        <end position="344"/>
    </location>
</feature>
<feature type="topological domain" description="Cytoplasmic" evidence="3">
    <location>
        <begin position="1"/>
        <end position="12"/>
    </location>
</feature>
<feature type="transmembrane region" description="Helical; Signal-anchor for type II membrane protein" evidence="3">
    <location>
        <begin position="13"/>
        <end position="38"/>
    </location>
</feature>
<feature type="topological domain" description="Lumenal" evidence="3">
    <location>
        <begin position="39"/>
        <end position="344"/>
    </location>
</feature>
<feature type="binding site" evidence="1">
    <location>
        <begin position="129"/>
        <end position="133"/>
    </location>
    <ligand>
        <name>UDP-alpha-D-galactose</name>
        <dbReference type="ChEBI" id="CHEBI:66914"/>
    </ligand>
</feature>
<feature type="binding site" evidence="1">
    <location>
        <begin position="168"/>
        <end position="170"/>
    </location>
    <ligand>
        <name>UDP-alpha-D-galactose</name>
        <dbReference type="ChEBI" id="CHEBI:66914"/>
    </ligand>
</feature>
<feature type="binding site" evidence="1">
    <location>
        <begin position="195"/>
        <end position="196"/>
    </location>
    <ligand>
        <name>UDP-alpha-D-galactose</name>
        <dbReference type="ChEBI" id="CHEBI:66914"/>
    </ligand>
</feature>
<feature type="binding site" evidence="1">
    <location>
        <position position="196"/>
    </location>
    <ligand>
        <name>Mn(2+)</name>
        <dbReference type="ChEBI" id="CHEBI:29035"/>
    </ligand>
</feature>
<feature type="binding site" evidence="1">
    <location>
        <position position="224"/>
    </location>
    <ligand>
        <name>UDP-alpha-D-galactose</name>
        <dbReference type="ChEBI" id="CHEBI:66914"/>
    </ligand>
</feature>
<feature type="binding site" evidence="1">
    <location>
        <position position="256"/>
    </location>
    <ligand>
        <name>UDP-alpha-D-galactose</name>
        <dbReference type="ChEBI" id="CHEBI:66914"/>
    </ligand>
</feature>
<feature type="binding site" evidence="1">
    <location>
        <begin position="258"/>
        <end position="261"/>
    </location>
    <ligand>
        <name>N-acetyl-D-glucosamine</name>
        <dbReference type="ChEBI" id="CHEBI:506227"/>
    </ligand>
</feature>
<feature type="binding site" evidence="1">
    <location>
        <begin position="289"/>
        <end position="291"/>
    </location>
    <ligand>
        <name>UDP-alpha-D-galactose</name>
        <dbReference type="ChEBI" id="CHEBI:66914"/>
    </ligand>
</feature>
<feature type="binding site" evidence="1">
    <location>
        <position position="289"/>
    </location>
    <ligand>
        <name>Mn(2+)</name>
        <dbReference type="ChEBI" id="CHEBI:29035"/>
    </ligand>
</feature>
<feature type="binding site" evidence="1">
    <location>
        <position position="301"/>
    </location>
    <ligand>
        <name>N-acetyl-D-glucosamine</name>
        <dbReference type="ChEBI" id="CHEBI:506227"/>
    </ligand>
</feature>
<feature type="glycosylation site" description="N-linked (GlcNAc...) asparagine" evidence="3">
    <location>
        <position position="220"/>
    </location>
</feature>
<feature type="glycosylation site" description="N-linked (GlcNAc...) asparagine" evidence="3">
    <location>
        <position position="335"/>
    </location>
</feature>
<feature type="disulfide bond" evidence="1">
    <location>
        <begin position="77"/>
        <end position="118"/>
    </location>
</feature>
<feature type="disulfide bond" evidence="1">
    <location>
        <begin position="189"/>
        <end position="208"/>
    </location>
</feature>
<name>B4GT4_CRIGR</name>
<proteinExistence type="evidence at transcript level"/>
<accession>Q80WN7</accession>
<organism>
    <name type="scientific">Cricetulus griseus</name>
    <name type="common">Chinese hamster</name>
    <name type="synonym">Cricetulus barabensis griseus</name>
    <dbReference type="NCBI Taxonomy" id="10029"/>
    <lineage>
        <taxon>Eukaryota</taxon>
        <taxon>Metazoa</taxon>
        <taxon>Chordata</taxon>
        <taxon>Craniata</taxon>
        <taxon>Vertebrata</taxon>
        <taxon>Euteleostomi</taxon>
        <taxon>Mammalia</taxon>
        <taxon>Eutheria</taxon>
        <taxon>Euarchontoglires</taxon>
        <taxon>Glires</taxon>
        <taxon>Rodentia</taxon>
        <taxon>Myomorpha</taxon>
        <taxon>Muroidea</taxon>
        <taxon>Cricetidae</taxon>
        <taxon>Cricetinae</taxon>
        <taxon>Cricetulus</taxon>
    </lineage>
</organism>
<comment type="function">
    <text evidence="2">Galactose (Gal) transferase involved in the biosynthesis of glycoproteins, proteoglycans, and glycosyphingolipids. Catalyzes the transfer of Gal residue via a beta1-&gt;4 linkage from UDP-Gal to the non-reducing terminal N-acetyl glucosamine 6-O-sulfate (6-O-sulfoGlcNAc) in the linearly growing chain of both N- and O-linked keratan sulfate proteoglycans. Cooperates with B3GNT7 N-acetyl glucosamine transferase and CHST6 and CHST1 sulfotransferases to construct and elongate mono- and disulfated disaccharide units [-&gt;3Galbeta1-&gt;4(6-sulfoGlcNAcbeta)1-&gt;] and [-&gt;3(6-sulfoGalbeta)1-&gt;4(6-sulfoGlcNAcbeta)1-&gt;] within keratan sulfate polymer.</text>
</comment>
<comment type="catalytic activity">
    <reaction evidence="2">
        <text>N-acetyl-D-glucosamine + UDP-alpha-D-galactose = beta-D-galactosyl-(1-&gt;4)-N-acetyl-D-glucosamine + UDP + H(+)</text>
        <dbReference type="Rhea" id="RHEA:17745"/>
        <dbReference type="ChEBI" id="CHEBI:15378"/>
        <dbReference type="ChEBI" id="CHEBI:58223"/>
        <dbReference type="ChEBI" id="CHEBI:60152"/>
        <dbReference type="ChEBI" id="CHEBI:66914"/>
        <dbReference type="ChEBI" id="CHEBI:506227"/>
        <dbReference type="EC" id="2.4.1.90"/>
    </reaction>
    <physiologicalReaction direction="left-to-right" evidence="2">
        <dbReference type="Rhea" id="RHEA:17746"/>
    </physiologicalReaction>
</comment>
<comment type="catalytic activity">
    <reaction evidence="2">
        <text>a beta-D-GlcNAc-(1-&gt;3)-beta-D-Gal-(1-&gt;4)-beta-D-Glc-(1&lt;-&gt;1)-Cer(d18:1(4E)) + UDP-alpha-D-galactose = a neolactoside nLc4Cer(d18:1(4E)) + UDP + H(+)</text>
        <dbReference type="Rhea" id="RHEA:31499"/>
        <dbReference type="ChEBI" id="CHEBI:15378"/>
        <dbReference type="ChEBI" id="CHEBI:17006"/>
        <dbReference type="ChEBI" id="CHEBI:17103"/>
        <dbReference type="ChEBI" id="CHEBI:58223"/>
        <dbReference type="ChEBI" id="CHEBI:66914"/>
        <dbReference type="EC" id="2.4.1.275"/>
    </reaction>
    <physiologicalReaction direction="left-to-right" evidence="2">
        <dbReference type="Rhea" id="RHEA:31500"/>
    </physiologicalReaction>
</comment>
<comment type="cofactor">
    <cofactor evidence="1">
        <name>Mn(2+)</name>
        <dbReference type="ChEBI" id="CHEBI:29035"/>
    </cofactor>
</comment>
<comment type="pathway">
    <text evidence="2">Protein modification; protein glycosylation.</text>
</comment>
<comment type="subcellular location">
    <subcellularLocation>
        <location evidence="1">Golgi apparatus</location>
        <location evidence="1">Golgi stack membrane</location>
        <topology evidence="1">Single-pass type II membrane protein</topology>
    </subcellularLocation>
    <text evidence="1">Trans cisternae of Golgi stack.</text>
</comment>
<comment type="similarity">
    <text evidence="4">Belongs to the glycosyltransferase 7 family.</text>
</comment>